<comment type="function">
    <text evidence="1">Thiolesterase that catalyzes the hydrolysis of S-D-lactoyl-glutathione to form glutathione and D-lactic acid.</text>
</comment>
<comment type="catalytic activity">
    <reaction evidence="1">
        <text>an S-(2-hydroxyacyl)glutathione + H2O = a 2-hydroxy carboxylate + glutathione + H(+)</text>
        <dbReference type="Rhea" id="RHEA:21864"/>
        <dbReference type="ChEBI" id="CHEBI:15377"/>
        <dbReference type="ChEBI" id="CHEBI:15378"/>
        <dbReference type="ChEBI" id="CHEBI:57925"/>
        <dbReference type="ChEBI" id="CHEBI:58896"/>
        <dbReference type="ChEBI" id="CHEBI:71261"/>
        <dbReference type="EC" id="3.1.2.6"/>
    </reaction>
</comment>
<comment type="cofactor">
    <cofactor evidence="1">
        <name>Zn(2+)</name>
        <dbReference type="ChEBI" id="CHEBI:29105"/>
    </cofactor>
    <text evidence="1">Binds 2 Zn(2+) ions per subunit.</text>
</comment>
<comment type="pathway">
    <text evidence="1">Secondary metabolite metabolism; methylglyoxal degradation; (R)-lactate from methylglyoxal: step 2/2.</text>
</comment>
<comment type="subunit">
    <text evidence="1">Monomer.</text>
</comment>
<comment type="similarity">
    <text evidence="1">Belongs to the metallo-beta-lactamase superfamily. Glyoxalase II family.</text>
</comment>
<gene>
    <name evidence="1" type="primary">gloB</name>
    <name type="ordered locus">NGO_1187</name>
</gene>
<protein>
    <recommendedName>
        <fullName evidence="1">Hydroxyacylglutathione hydrolase</fullName>
        <ecNumber evidence="1">3.1.2.6</ecNumber>
    </recommendedName>
    <alternativeName>
        <fullName evidence="1">Glyoxalase II</fullName>
        <shortName evidence="1">Glx II</shortName>
    </alternativeName>
</protein>
<feature type="chain" id="PRO_0000309662" description="Hydroxyacylglutathione hydrolase">
    <location>
        <begin position="1"/>
        <end position="250"/>
    </location>
</feature>
<feature type="binding site" evidence="1">
    <location>
        <position position="52"/>
    </location>
    <ligand>
        <name>Zn(2+)</name>
        <dbReference type="ChEBI" id="CHEBI:29105"/>
        <label>1</label>
    </ligand>
</feature>
<feature type="binding site" evidence="1">
    <location>
        <position position="54"/>
    </location>
    <ligand>
        <name>Zn(2+)</name>
        <dbReference type="ChEBI" id="CHEBI:29105"/>
        <label>1</label>
    </ligand>
</feature>
<feature type="binding site" evidence="1">
    <location>
        <position position="56"/>
    </location>
    <ligand>
        <name>Zn(2+)</name>
        <dbReference type="ChEBI" id="CHEBI:29105"/>
        <label>2</label>
    </ligand>
</feature>
<feature type="binding site" evidence="1">
    <location>
        <position position="57"/>
    </location>
    <ligand>
        <name>Zn(2+)</name>
        <dbReference type="ChEBI" id="CHEBI:29105"/>
        <label>2</label>
    </ligand>
</feature>
<feature type="binding site" evidence="1">
    <location>
        <position position="107"/>
    </location>
    <ligand>
        <name>Zn(2+)</name>
        <dbReference type="ChEBI" id="CHEBI:29105"/>
        <label>1</label>
    </ligand>
</feature>
<feature type="binding site" evidence="1">
    <location>
        <position position="128"/>
    </location>
    <ligand>
        <name>Zn(2+)</name>
        <dbReference type="ChEBI" id="CHEBI:29105"/>
        <label>1</label>
    </ligand>
</feature>
<feature type="binding site" evidence="1">
    <location>
        <position position="128"/>
    </location>
    <ligand>
        <name>Zn(2+)</name>
        <dbReference type="ChEBI" id="CHEBI:29105"/>
        <label>2</label>
    </ligand>
</feature>
<feature type="binding site" evidence="1">
    <location>
        <position position="166"/>
    </location>
    <ligand>
        <name>Zn(2+)</name>
        <dbReference type="ChEBI" id="CHEBI:29105"/>
        <label>2</label>
    </ligand>
</feature>
<proteinExistence type="inferred from homology"/>
<dbReference type="EC" id="3.1.2.6" evidence="1"/>
<dbReference type="EMBL" id="AE004969">
    <property type="protein sequence ID" value="AAW89847.1"/>
    <property type="molecule type" value="Genomic_DNA"/>
</dbReference>
<dbReference type="RefSeq" id="WP_003689617.1">
    <property type="nucleotide sequence ID" value="NC_002946.2"/>
</dbReference>
<dbReference type="RefSeq" id="YP_208259.1">
    <property type="nucleotide sequence ID" value="NC_002946.2"/>
</dbReference>
<dbReference type="SMR" id="Q5F7J0"/>
<dbReference type="STRING" id="242231.NGO_1187"/>
<dbReference type="GeneID" id="66753907"/>
<dbReference type="KEGG" id="ngo:NGO_1187"/>
<dbReference type="PATRIC" id="fig|242231.10.peg.1394"/>
<dbReference type="HOGENOM" id="CLU_030571_4_1_4"/>
<dbReference type="UniPathway" id="UPA00619">
    <property type="reaction ID" value="UER00676"/>
</dbReference>
<dbReference type="Proteomes" id="UP000000535">
    <property type="component" value="Chromosome"/>
</dbReference>
<dbReference type="GO" id="GO:0004416">
    <property type="term" value="F:hydroxyacylglutathione hydrolase activity"/>
    <property type="evidence" value="ECO:0007669"/>
    <property type="project" value="UniProtKB-UniRule"/>
</dbReference>
<dbReference type="GO" id="GO:0046872">
    <property type="term" value="F:metal ion binding"/>
    <property type="evidence" value="ECO:0007669"/>
    <property type="project" value="UniProtKB-KW"/>
</dbReference>
<dbReference type="GO" id="GO:0019243">
    <property type="term" value="P:methylglyoxal catabolic process to D-lactate via S-lactoyl-glutathione"/>
    <property type="evidence" value="ECO:0007669"/>
    <property type="project" value="InterPro"/>
</dbReference>
<dbReference type="CDD" id="cd07723">
    <property type="entry name" value="hydroxyacylglutathione_hydrolase_MBL-fold"/>
    <property type="match status" value="1"/>
</dbReference>
<dbReference type="Gene3D" id="3.60.15.10">
    <property type="entry name" value="Ribonuclease Z/Hydroxyacylglutathione hydrolase-like"/>
    <property type="match status" value="1"/>
</dbReference>
<dbReference type="HAMAP" id="MF_01374">
    <property type="entry name" value="Glyoxalase_2"/>
    <property type="match status" value="1"/>
</dbReference>
<dbReference type="InterPro" id="IPR035680">
    <property type="entry name" value="Clx_II_MBL"/>
</dbReference>
<dbReference type="InterPro" id="IPR050110">
    <property type="entry name" value="Glyoxalase_II_hydrolase"/>
</dbReference>
<dbReference type="InterPro" id="IPR032282">
    <property type="entry name" value="HAGH_C"/>
</dbReference>
<dbReference type="InterPro" id="IPR017782">
    <property type="entry name" value="Hydroxyacylglutathione_Hdrlase"/>
</dbReference>
<dbReference type="InterPro" id="IPR001279">
    <property type="entry name" value="Metallo-B-lactamas"/>
</dbReference>
<dbReference type="InterPro" id="IPR036866">
    <property type="entry name" value="RibonucZ/Hydroxyglut_hydro"/>
</dbReference>
<dbReference type="NCBIfam" id="TIGR03413">
    <property type="entry name" value="GSH_gloB"/>
    <property type="match status" value="1"/>
</dbReference>
<dbReference type="PANTHER" id="PTHR43705">
    <property type="entry name" value="HYDROXYACYLGLUTATHIONE HYDROLASE"/>
    <property type="match status" value="1"/>
</dbReference>
<dbReference type="PANTHER" id="PTHR43705:SF1">
    <property type="entry name" value="HYDROXYACYLGLUTATHIONE HYDROLASE GLOB"/>
    <property type="match status" value="1"/>
</dbReference>
<dbReference type="Pfam" id="PF16123">
    <property type="entry name" value="HAGH_C"/>
    <property type="match status" value="1"/>
</dbReference>
<dbReference type="Pfam" id="PF00753">
    <property type="entry name" value="Lactamase_B"/>
    <property type="match status" value="1"/>
</dbReference>
<dbReference type="SMART" id="SM00849">
    <property type="entry name" value="Lactamase_B"/>
    <property type="match status" value="1"/>
</dbReference>
<dbReference type="SUPFAM" id="SSF56281">
    <property type="entry name" value="Metallo-hydrolase/oxidoreductase"/>
    <property type="match status" value="1"/>
</dbReference>
<name>GLO2_NEIG1</name>
<keyword id="KW-0378">Hydrolase</keyword>
<keyword id="KW-0479">Metal-binding</keyword>
<keyword id="KW-1185">Reference proteome</keyword>
<keyword id="KW-0862">Zinc</keyword>
<accession>Q5F7J0</accession>
<evidence type="ECO:0000255" key="1">
    <source>
        <dbReference type="HAMAP-Rule" id="MF_01374"/>
    </source>
</evidence>
<sequence>MKITPVKALTDNYIWMIQHGNHAVCVDPSEPSPVLEFLVRNRLMLAQTWVTHPHPDHEGGAAALWRGYMESPVYGESDIEAATHTVTAGTRFTFGNGQVTVWATPGHTDRHTSYLLETSDGIHVFCGDTLFSAGCGRVFTGTVEQLYDNFQRFNQLPEGTLFYPAHEYTAANLRFAAHIEPDNADIQTALKAAEHTPTLPVTLAHERRVNPFLRTEIPAVRQRAEALVGKTLNSGLEVFAALRELKNAYR</sequence>
<organism>
    <name type="scientific">Neisseria gonorrhoeae (strain ATCC 700825 / FA 1090)</name>
    <dbReference type="NCBI Taxonomy" id="242231"/>
    <lineage>
        <taxon>Bacteria</taxon>
        <taxon>Pseudomonadati</taxon>
        <taxon>Pseudomonadota</taxon>
        <taxon>Betaproteobacteria</taxon>
        <taxon>Neisseriales</taxon>
        <taxon>Neisseriaceae</taxon>
        <taxon>Neisseria</taxon>
    </lineage>
</organism>
<reference key="1">
    <citation type="submission" date="2003-03" db="EMBL/GenBank/DDBJ databases">
        <title>The complete genome sequence of Neisseria gonorrhoeae.</title>
        <authorList>
            <person name="Lewis L.A."/>
            <person name="Gillaspy A.F."/>
            <person name="McLaughlin R.E."/>
            <person name="Gipson M."/>
            <person name="Ducey T.F."/>
            <person name="Ownbey T."/>
            <person name="Hartman K."/>
            <person name="Nydick C."/>
            <person name="Carson M.B."/>
            <person name="Vaughn J."/>
            <person name="Thomson C."/>
            <person name="Song L."/>
            <person name="Lin S."/>
            <person name="Yuan X."/>
            <person name="Najar F."/>
            <person name="Zhan M."/>
            <person name="Ren Q."/>
            <person name="Zhu H."/>
            <person name="Qi S."/>
            <person name="Kenton S.M."/>
            <person name="Lai H."/>
            <person name="White J.D."/>
            <person name="Clifton S."/>
            <person name="Roe B.A."/>
            <person name="Dyer D.W."/>
        </authorList>
    </citation>
    <scope>NUCLEOTIDE SEQUENCE [LARGE SCALE GENOMIC DNA]</scope>
    <source>
        <strain>ATCC 700825 / FA 1090</strain>
    </source>
</reference>